<dbReference type="EMBL" id="CR954253">
    <property type="protein sequence ID" value="CAI97644.1"/>
    <property type="molecule type" value="Genomic_DNA"/>
</dbReference>
<dbReference type="RefSeq" id="WP_003614010.1">
    <property type="nucleotide sequence ID" value="NZ_JQAV01000019.1"/>
</dbReference>
<dbReference type="SMR" id="Q1GAM0"/>
<dbReference type="STRING" id="390333.Ldb0822"/>
<dbReference type="KEGG" id="ldb:Ldb0822"/>
<dbReference type="eggNOG" id="COG0333">
    <property type="taxonomic scope" value="Bacteria"/>
</dbReference>
<dbReference type="HOGENOM" id="CLU_129084_2_1_9"/>
<dbReference type="BioCyc" id="LDEL390333:LDB_RS09965-MONOMER"/>
<dbReference type="Proteomes" id="UP000001259">
    <property type="component" value="Chromosome"/>
</dbReference>
<dbReference type="GO" id="GO:0015934">
    <property type="term" value="C:large ribosomal subunit"/>
    <property type="evidence" value="ECO:0007669"/>
    <property type="project" value="InterPro"/>
</dbReference>
<dbReference type="GO" id="GO:0003735">
    <property type="term" value="F:structural constituent of ribosome"/>
    <property type="evidence" value="ECO:0007669"/>
    <property type="project" value="InterPro"/>
</dbReference>
<dbReference type="GO" id="GO:0006412">
    <property type="term" value="P:translation"/>
    <property type="evidence" value="ECO:0007669"/>
    <property type="project" value="UniProtKB-UniRule"/>
</dbReference>
<dbReference type="HAMAP" id="MF_00340">
    <property type="entry name" value="Ribosomal_bL32"/>
    <property type="match status" value="1"/>
</dbReference>
<dbReference type="InterPro" id="IPR002677">
    <property type="entry name" value="Ribosomal_bL32"/>
</dbReference>
<dbReference type="InterPro" id="IPR044957">
    <property type="entry name" value="Ribosomal_bL32_bact"/>
</dbReference>
<dbReference type="InterPro" id="IPR011332">
    <property type="entry name" value="Ribosomal_zn-bd"/>
</dbReference>
<dbReference type="NCBIfam" id="TIGR01031">
    <property type="entry name" value="rpmF_bact"/>
    <property type="match status" value="1"/>
</dbReference>
<dbReference type="PANTHER" id="PTHR35534">
    <property type="entry name" value="50S RIBOSOMAL PROTEIN L32"/>
    <property type="match status" value="1"/>
</dbReference>
<dbReference type="PANTHER" id="PTHR35534:SF1">
    <property type="entry name" value="LARGE RIBOSOMAL SUBUNIT PROTEIN BL32"/>
    <property type="match status" value="1"/>
</dbReference>
<dbReference type="Pfam" id="PF01783">
    <property type="entry name" value="Ribosomal_L32p"/>
    <property type="match status" value="1"/>
</dbReference>
<dbReference type="SUPFAM" id="SSF57829">
    <property type="entry name" value="Zn-binding ribosomal proteins"/>
    <property type="match status" value="1"/>
</dbReference>
<organism>
    <name type="scientific">Lactobacillus delbrueckii subsp. bulgaricus (strain ATCC 11842 / DSM 20081 / BCRC 10696 / JCM 1002 / NBRC 13953 / NCIMB 11778 / NCTC 12712 / WDCM 00102 / Lb 14)</name>
    <dbReference type="NCBI Taxonomy" id="390333"/>
    <lineage>
        <taxon>Bacteria</taxon>
        <taxon>Bacillati</taxon>
        <taxon>Bacillota</taxon>
        <taxon>Bacilli</taxon>
        <taxon>Lactobacillales</taxon>
        <taxon>Lactobacillaceae</taxon>
        <taxon>Lactobacillus</taxon>
    </lineage>
</organism>
<sequence length="63" mass="7156">MAVPARHTSKQKKRSRRAHLKLSVPAMHYDATTGEYRLSHRVSPKGYYKGRQVVSENSASDND</sequence>
<name>RL32_LACDA</name>
<feature type="chain" id="PRO_0000296484" description="Large ribosomal subunit protein bL32">
    <location>
        <begin position="1"/>
        <end position="63"/>
    </location>
</feature>
<protein>
    <recommendedName>
        <fullName evidence="1">Large ribosomal subunit protein bL32</fullName>
    </recommendedName>
    <alternativeName>
        <fullName evidence="2">50S ribosomal protein L32</fullName>
    </alternativeName>
</protein>
<proteinExistence type="inferred from homology"/>
<accession>Q1GAM0</accession>
<comment type="similarity">
    <text evidence="1">Belongs to the bacterial ribosomal protein bL32 family.</text>
</comment>
<evidence type="ECO:0000255" key="1">
    <source>
        <dbReference type="HAMAP-Rule" id="MF_00340"/>
    </source>
</evidence>
<evidence type="ECO:0000305" key="2"/>
<gene>
    <name evidence="1" type="primary">rpmF</name>
    <name type="ordered locus">Ldb0822</name>
</gene>
<keyword id="KW-1185">Reference proteome</keyword>
<keyword id="KW-0687">Ribonucleoprotein</keyword>
<keyword id="KW-0689">Ribosomal protein</keyword>
<reference key="1">
    <citation type="journal article" date="2006" name="Proc. Natl. Acad. Sci. U.S.A.">
        <title>The complete genome sequence of Lactobacillus bulgaricus reveals extensive and ongoing reductive evolution.</title>
        <authorList>
            <person name="van de Guchte M."/>
            <person name="Penaud S."/>
            <person name="Grimaldi C."/>
            <person name="Barbe V."/>
            <person name="Bryson K."/>
            <person name="Nicolas P."/>
            <person name="Robert C."/>
            <person name="Oztas S."/>
            <person name="Mangenot S."/>
            <person name="Couloux A."/>
            <person name="Loux V."/>
            <person name="Dervyn R."/>
            <person name="Bossy R."/>
            <person name="Bolotin A."/>
            <person name="Batto J.-M."/>
            <person name="Walunas T."/>
            <person name="Gibrat J.-F."/>
            <person name="Bessieres P."/>
            <person name="Weissenbach J."/>
            <person name="Ehrlich S.D."/>
            <person name="Maguin E."/>
        </authorList>
    </citation>
    <scope>NUCLEOTIDE SEQUENCE [LARGE SCALE GENOMIC DNA]</scope>
    <source>
        <strain>ATCC 11842 / DSM 20081 / BCRC 10696 / JCM 1002 / NBRC 13953 / NCIMB 11778 / NCTC 12712 / WDCM 00102 / Lb 14</strain>
    </source>
</reference>